<feature type="chain" id="PRO_0000284779" description="Dynein regulatory complex subunit 2">
    <location>
        <begin position="1"/>
        <end position="484"/>
    </location>
</feature>
<feature type="coiled-coil region" evidence="3">
    <location>
        <begin position="92"/>
        <end position="160"/>
    </location>
</feature>
<feature type="coiled-coil region" evidence="3">
    <location>
        <begin position="374"/>
        <end position="403"/>
    </location>
</feature>
<feature type="sequence conflict" description="In Ref. 2; BAB63002." evidence="4" ref="2">
    <original>T</original>
    <variation>A</variation>
    <location>
        <position position="484"/>
    </location>
</feature>
<gene>
    <name type="primary">CCDC65</name>
    <name evidence="2" type="synonym">DRC2</name>
    <name type="ORF">QtsA-12866</name>
    <name type="ORF">QtsA-15372</name>
</gene>
<comment type="function">
    <text evidence="1 2">Component of the nexin-dynein regulatory complex (N-DRC), a key regulator of ciliary/flagellar motility which maintains the alignment and integrity of the distal axoneme and regulates microtubule sliding in motile axonemes. Plays a critical role in the assembly of N-DRC and also stabilizes the assembly of multiple inner dynein arms and radial spokes. Coassembles with DRC1 to form a central scaffold needed for assembly of the N-DRC and its attachment to the outer doublet microtubules.</text>
</comment>
<comment type="subunit">
    <text evidence="1 2">Component of the nexin-dynein regulatory complex (N-DRC). Interacts with DRC1.</text>
</comment>
<comment type="subcellular location">
    <subcellularLocation>
        <location evidence="1">Cytoplasm</location>
        <location evidence="1">Cytoskeleton</location>
        <location evidence="1">Flagellum basal body</location>
    </subcellularLocation>
    <subcellularLocation>
        <location evidence="1">Cell projection</location>
        <location evidence="1">Cilium</location>
        <location evidence="1">Flagellum</location>
    </subcellularLocation>
    <subcellularLocation>
        <location evidence="1">Cytoplasm</location>
        <location evidence="1">Cytoskeleton</location>
        <location evidence="1">Flagellum axoneme</location>
    </subcellularLocation>
</comment>
<comment type="similarity">
    <text>Belongs to the DRC2 family.</text>
</comment>
<comment type="sequence caution" evidence="4">
    <conflict type="erroneous initiation">
        <sequence resource="EMBL-CDS" id="BAB63002"/>
    </conflict>
</comment>
<protein>
    <recommendedName>
        <fullName evidence="2">Dynein regulatory complex subunit 2</fullName>
    </recommendedName>
    <alternativeName>
        <fullName>Coiled-coil domain-containing protein 65</fullName>
    </alternativeName>
</protein>
<name>DRC2_MACFA</name>
<dbReference type="EMBL" id="AB168851">
    <property type="protein sequence ID" value="BAE00955.1"/>
    <property type="molecule type" value="mRNA"/>
</dbReference>
<dbReference type="EMBL" id="AB070057">
    <property type="protein sequence ID" value="BAB63002.1"/>
    <property type="status" value="ALT_INIT"/>
    <property type="molecule type" value="mRNA"/>
</dbReference>
<dbReference type="SMR" id="Q4R7G7"/>
<dbReference type="STRING" id="9541.ENSMFAP00000045929"/>
<dbReference type="eggNOG" id="ENOG502QQDD">
    <property type="taxonomic scope" value="Eukaryota"/>
</dbReference>
<dbReference type="Proteomes" id="UP000233100">
    <property type="component" value="Unplaced"/>
</dbReference>
<dbReference type="GO" id="GO:0005858">
    <property type="term" value="C:axonemal dynein complex"/>
    <property type="evidence" value="ECO:0007669"/>
    <property type="project" value="InterPro"/>
</dbReference>
<dbReference type="GO" id="GO:0031514">
    <property type="term" value="C:motile cilium"/>
    <property type="evidence" value="ECO:0007669"/>
    <property type="project" value="UniProtKB-SubCell"/>
</dbReference>
<dbReference type="GO" id="GO:0070286">
    <property type="term" value="P:axonemal dynein complex assembly"/>
    <property type="evidence" value="ECO:0007669"/>
    <property type="project" value="InterPro"/>
</dbReference>
<dbReference type="GO" id="GO:0060285">
    <property type="term" value="P:cilium-dependent cell motility"/>
    <property type="evidence" value="ECO:0007669"/>
    <property type="project" value="TreeGrafter"/>
</dbReference>
<dbReference type="GO" id="GO:0003352">
    <property type="term" value="P:regulation of cilium movement"/>
    <property type="evidence" value="ECO:0007669"/>
    <property type="project" value="TreeGrafter"/>
</dbReference>
<dbReference type="InterPro" id="IPR039505">
    <property type="entry name" value="DRC1/2_N"/>
</dbReference>
<dbReference type="InterPro" id="IPR039750">
    <property type="entry name" value="DRC1/DRC2"/>
</dbReference>
<dbReference type="PANTHER" id="PTHR21625:SF0">
    <property type="entry name" value="DYNEIN REGULATORY COMPLEX SUBUNIT 2"/>
    <property type="match status" value="1"/>
</dbReference>
<dbReference type="PANTHER" id="PTHR21625">
    <property type="entry name" value="NYD-SP28 PROTEIN"/>
    <property type="match status" value="1"/>
</dbReference>
<dbReference type="Pfam" id="PF14772">
    <property type="entry name" value="NYD-SP28"/>
    <property type="match status" value="1"/>
</dbReference>
<organism>
    <name type="scientific">Macaca fascicularis</name>
    <name type="common">Crab-eating macaque</name>
    <name type="synonym">Cynomolgus monkey</name>
    <dbReference type="NCBI Taxonomy" id="9541"/>
    <lineage>
        <taxon>Eukaryota</taxon>
        <taxon>Metazoa</taxon>
        <taxon>Chordata</taxon>
        <taxon>Craniata</taxon>
        <taxon>Vertebrata</taxon>
        <taxon>Euteleostomi</taxon>
        <taxon>Mammalia</taxon>
        <taxon>Eutheria</taxon>
        <taxon>Euarchontoglires</taxon>
        <taxon>Primates</taxon>
        <taxon>Haplorrhini</taxon>
        <taxon>Catarrhini</taxon>
        <taxon>Cercopithecidae</taxon>
        <taxon>Cercopithecinae</taxon>
        <taxon>Macaca</taxon>
    </lineage>
</organism>
<evidence type="ECO:0000250" key="1">
    <source>
        <dbReference type="UniProtKB" id="A8JB22"/>
    </source>
</evidence>
<evidence type="ECO:0000250" key="2">
    <source>
        <dbReference type="UniProtKB" id="Q8IXS2"/>
    </source>
</evidence>
<evidence type="ECO:0000255" key="3"/>
<evidence type="ECO:0000305" key="4"/>
<reference key="1">
    <citation type="submission" date="2005-06" db="EMBL/GenBank/DDBJ databases">
        <title>DNA sequences of macaque genes expressed in brain or testis and its evolutionary implications.</title>
        <authorList>
            <consortium name="International consortium for macaque cDNA sequencing and analysis"/>
        </authorList>
    </citation>
    <scope>NUCLEOTIDE SEQUENCE [LARGE SCALE MRNA]</scope>
    <source>
        <tissue>Testis</tissue>
    </source>
</reference>
<reference key="2">
    <citation type="journal article" date="2002" name="BMC Genomics">
        <title>Cynomolgus monkey testicular cDNAs for discovery of novel human genes in the human genome sequence.</title>
        <authorList>
            <person name="Osada N."/>
            <person name="Hida M."/>
            <person name="Kusuda J."/>
            <person name="Tanuma R."/>
            <person name="Hirata M."/>
            <person name="Suto Y."/>
            <person name="Hirai M."/>
            <person name="Terao K."/>
            <person name="Sugano S."/>
            <person name="Hashimoto K."/>
        </authorList>
    </citation>
    <scope>NUCLEOTIDE SEQUENCE [LARGE SCALE MRNA] OF 171-484</scope>
    <source>
        <tissue>Testis</tissue>
    </source>
</reference>
<sequence length="484" mass="57131">MPKKEKKAKTPLSDEEQLLLFQQKLLTEEEMAKKKERLLSQFLKDKLAKEEHNSALNLNKINTQWRTVLREVKTRELHKDIEILSQTFERVVDCKDNVIKSLAKDLSEAEEQYARALRSHLHSVDQLLALQRHRLSLLEESYNMELEALTKEFETERKTIIDQHEKEIHYLQDIFMAMEQNYIDSEYESKLEFQSMWNDLKNMNLEEKHFLRLHLENIVEDLWRKFQDVLKNYTDATEDRKAAFETLQVKDEKSSKEIEVQMKKIQKLQDAITISKGKIMIHSRESEDENRYIRNDKELVLVQLRKLKAQRTQARAASQKNLVKLTLESNATLKALRKIVDKGEKILKLAEICRKFETEEEKVLPFYSSVLTPKEQEGIEENNLEELTEELAKVMVDYTGMENFWKRYNKVKLEQLSLQHRRAQLLDINGKLREMLKQYLDGISVSDEVLSQLNPLFIVNYQSNLPQPLSIPIAHPGDKQHPTT</sequence>
<keyword id="KW-0966">Cell projection</keyword>
<keyword id="KW-0969">Cilium</keyword>
<keyword id="KW-0175">Coiled coil</keyword>
<keyword id="KW-0963">Cytoplasm</keyword>
<keyword id="KW-0206">Cytoskeleton</keyword>
<keyword id="KW-0282">Flagellum</keyword>
<keyword id="KW-1185">Reference proteome</keyword>
<proteinExistence type="evidence at transcript level"/>
<accession>Q4R7G7</accession>
<accession>Q95JX0</accession>